<comment type="function">
    <text evidence="2">Unidirectional NADP(+)-dependent cortisol dehydrogenase (in vitro).</text>
</comment>
<comment type="catalytic activity">
    <reaction evidence="2">
        <text>cortisone + NADPH + H(+) = cortisol + NADP(+)</text>
        <dbReference type="Rhea" id="RHEA:68616"/>
        <dbReference type="ChEBI" id="CHEBI:15378"/>
        <dbReference type="ChEBI" id="CHEBI:16962"/>
        <dbReference type="ChEBI" id="CHEBI:17650"/>
        <dbReference type="ChEBI" id="CHEBI:57783"/>
        <dbReference type="ChEBI" id="CHEBI:58349"/>
    </reaction>
    <physiologicalReaction direction="right-to-left" evidence="2">
        <dbReference type="Rhea" id="RHEA:68618"/>
    </physiologicalReaction>
</comment>
<comment type="subcellular location">
    <subcellularLocation>
        <location evidence="5">Secreted</location>
    </subcellularLocation>
</comment>
<comment type="similarity">
    <text evidence="5">Belongs to the short-chain dehydrogenases/reductases (SDR) family.</text>
</comment>
<comment type="caution">
    <text evidence="5">Present in human, non-human primate, sheep, pig and many other higher organisms, whereas an ortholog is absent in the genomes of mouse, rat and rabbit.</text>
</comment>
<name>DHI1B_XENLA</name>
<accession>Q7SYS6</accession>
<keyword id="KW-0521">NADP</keyword>
<keyword id="KW-0560">Oxidoreductase</keyword>
<keyword id="KW-1185">Reference proteome</keyword>
<keyword id="KW-0964">Secreted</keyword>
<keyword id="KW-0732">Signal</keyword>
<proteinExistence type="evidence at transcript level"/>
<protein>
    <recommendedName>
        <fullName>Hydroxysteroid 11-beta-dehydrogenase 1-like protein B</fullName>
        <ecNumber evidence="2">1.1.1.-</ecNumber>
    </recommendedName>
    <alternativeName>
        <fullName>11-beta-hydroxysteroid dehydrogenase type 3-B</fullName>
        <shortName>11-DH3-B</shortName>
        <shortName>11-beta-HSD3-B</shortName>
    </alternativeName>
</protein>
<dbReference type="EC" id="1.1.1.-" evidence="2"/>
<dbReference type="EMBL" id="BC054284">
    <property type="protein sequence ID" value="AAH54284.1"/>
    <property type="molecule type" value="mRNA"/>
</dbReference>
<dbReference type="RefSeq" id="NP_001079804.1">
    <property type="nucleotide sequence ID" value="NM_001086335.1"/>
</dbReference>
<dbReference type="SMR" id="Q7SYS6"/>
<dbReference type="DNASU" id="379494"/>
<dbReference type="GeneID" id="379494"/>
<dbReference type="KEGG" id="xla:379494"/>
<dbReference type="AGR" id="Xenbase:XB-GENE-5834075"/>
<dbReference type="CTD" id="379494"/>
<dbReference type="Xenbase" id="XB-GENE-5834075">
    <property type="gene designation" value="hsd11b1l.2.L"/>
</dbReference>
<dbReference type="OrthoDB" id="1933717at2759"/>
<dbReference type="Proteomes" id="UP000186698">
    <property type="component" value="Chromosome 1L"/>
</dbReference>
<dbReference type="Bgee" id="379494">
    <property type="expression patterns" value="Expressed in intestine and 5 other cell types or tissues"/>
</dbReference>
<dbReference type="GO" id="GO:0005576">
    <property type="term" value="C:extracellular region"/>
    <property type="evidence" value="ECO:0007669"/>
    <property type="project" value="UniProtKB-SubCell"/>
</dbReference>
<dbReference type="GO" id="GO:0043231">
    <property type="term" value="C:intracellular membrane-bounded organelle"/>
    <property type="evidence" value="ECO:0000318"/>
    <property type="project" value="GO_Central"/>
</dbReference>
<dbReference type="GO" id="GO:0016491">
    <property type="term" value="F:oxidoreductase activity"/>
    <property type="evidence" value="ECO:0000318"/>
    <property type="project" value="GO_Central"/>
</dbReference>
<dbReference type="CDD" id="cd05332">
    <property type="entry name" value="11beta-HSD1_like_SDR_c"/>
    <property type="match status" value="1"/>
</dbReference>
<dbReference type="Gene3D" id="3.40.50.720">
    <property type="entry name" value="NAD(P)-binding Rossmann-like Domain"/>
    <property type="match status" value="1"/>
</dbReference>
<dbReference type="InterPro" id="IPR051253">
    <property type="entry name" value="11-beta-HSD"/>
</dbReference>
<dbReference type="InterPro" id="IPR036291">
    <property type="entry name" value="NAD(P)-bd_dom_sf"/>
</dbReference>
<dbReference type="InterPro" id="IPR020904">
    <property type="entry name" value="Sc_DH/Rdtase_CS"/>
</dbReference>
<dbReference type="InterPro" id="IPR002347">
    <property type="entry name" value="SDR_fam"/>
</dbReference>
<dbReference type="PANTHER" id="PTHR44279">
    <property type="entry name" value="HYDROXYSTEROID (11-BETA) DEHYDROGENASE 1-LIKE B-RELATED"/>
    <property type="match status" value="1"/>
</dbReference>
<dbReference type="PANTHER" id="PTHR44279:SF5">
    <property type="entry name" value="HYDROXYSTEROID 11-BETA-DEHYDROGENASE 1-LIKE PROTEIN B"/>
    <property type="match status" value="1"/>
</dbReference>
<dbReference type="Pfam" id="PF00106">
    <property type="entry name" value="adh_short"/>
    <property type="match status" value="1"/>
</dbReference>
<dbReference type="PRINTS" id="PR00081">
    <property type="entry name" value="GDHRDH"/>
</dbReference>
<dbReference type="SUPFAM" id="SSF51735">
    <property type="entry name" value="NAD(P)-binding Rossmann-fold domains"/>
    <property type="match status" value="1"/>
</dbReference>
<dbReference type="PROSITE" id="PS00061">
    <property type="entry name" value="ADH_SHORT"/>
    <property type="match status" value="1"/>
</dbReference>
<sequence>MAGVILLLLSLCVGYIAYYFFRTESMNKESVRGKRVLITGSSTGLGEQIAYEFARMGAHIMITARRLQQLQEVASQCMKLGAASAHYVASDMGNLESAQSVAQEAVVKLGGLDYLVLNHIGGSGGFGFFKGDMDPVVGSTTVNFLSYVQLTSSALSALQESQGSIVVISSMSGRIGAPFTTSYCASKFALEGFYSSLRREFALQNSKMSVTVAVLGYIDTENAVKKVGNKVSMTASSKEDCAREVVKAAVLQQPEIFYPYWGIKPFVLLRDWFPGLVAKILDKCYILENIQ</sequence>
<gene>
    <name type="primary">hsd11b1l-b</name>
    <name type="synonym">hsd3-b</name>
</gene>
<reference key="1">
    <citation type="submission" date="2003-06" db="EMBL/GenBank/DDBJ databases">
        <authorList>
            <consortium name="NIH - Xenopus Gene Collection (XGC) project"/>
        </authorList>
    </citation>
    <scope>NUCLEOTIDE SEQUENCE [LARGE SCALE MRNA]</scope>
    <source>
        <tissue>Tadpole</tissue>
    </source>
</reference>
<feature type="signal peptide" evidence="3">
    <location>
        <begin position="1"/>
        <end position="17"/>
    </location>
</feature>
<feature type="chain" id="PRO_0000316821" description="Hydroxysteroid 11-beta-dehydrogenase 1-like protein B">
    <location>
        <begin position="18"/>
        <end position="291"/>
    </location>
</feature>
<feature type="active site" description="Proton acceptor" evidence="4">
    <location>
        <position position="183"/>
    </location>
</feature>
<feature type="binding site" evidence="1">
    <location>
        <begin position="40"/>
        <end position="66"/>
    </location>
    <ligand>
        <name>NADP(+)</name>
        <dbReference type="ChEBI" id="CHEBI:58349"/>
    </ligand>
</feature>
<feature type="binding site" evidence="1">
    <location>
        <begin position="91"/>
        <end position="92"/>
    </location>
    <ligand>
        <name>NADP(+)</name>
        <dbReference type="ChEBI" id="CHEBI:58349"/>
    </ligand>
</feature>
<feature type="binding site" evidence="1">
    <location>
        <begin position="118"/>
        <end position="120"/>
    </location>
    <ligand>
        <name>NADP(+)</name>
        <dbReference type="ChEBI" id="CHEBI:58349"/>
    </ligand>
</feature>
<feature type="binding site" evidence="1">
    <location>
        <position position="170"/>
    </location>
    <ligand>
        <name>substrate</name>
    </ligand>
</feature>
<feature type="binding site" evidence="1">
    <location>
        <begin position="183"/>
        <end position="187"/>
    </location>
    <ligand>
        <name>NADP(+)</name>
        <dbReference type="ChEBI" id="CHEBI:58349"/>
    </ligand>
</feature>
<feature type="binding site" evidence="1">
    <location>
        <begin position="216"/>
        <end position="222"/>
    </location>
    <ligand>
        <name>NADP(+)</name>
        <dbReference type="ChEBI" id="CHEBI:58349"/>
    </ligand>
</feature>
<evidence type="ECO:0000250" key="1"/>
<evidence type="ECO:0000250" key="2">
    <source>
        <dbReference type="UniProtKB" id="Q7Z5J1"/>
    </source>
</evidence>
<evidence type="ECO:0000255" key="3"/>
<evidence type="ECO:0000255" key="4">
    <source>
        <dbReference type="PROSITE-ProRule" id="PRU10001"/>
    </source>
</evidence>
<evidence type="ECO:0000305" key="5"/>
<organism>
    <name type="scientific">Xenopus laevis</name>
    <name type="common">African clawed frog</name>
    <dbReference type="NCBI Taxonomy" id="8355"/>
    <lineage>
        <taxon>Eukaryota</taxon>
        <taxon>Metazoa</taxon>
        <taxon>Chordata</taxon>
        <taxon>Craniata</taxon>
        <taxon>Vertebrata</taxon>
        <taxon>Euteleostomi</taxon>
        <taxon>Amphibia</taxon>
        <taxon>Batrachia</taxon>
        <taxon>Anura</taxon>
        <taxon>Pipoidea</taxon>
        <taxon>Pipidae</taxon>
        <taxon>Xenopodinae</taxon>
        <taxon>Xenopus</taxon>
        <taxon>Xenopus</taxon>
    </lineage>
</organism>